<proteinExistence type="evidence at transcript level"/>
<name>CNBP_RAT</name>
<accession>P62634</accession>
<accession>P20694</accession>
<accession>Q5QJQ8</accession>
<evidence type="ECO:0000250" key="1">
    <source>
        <dbReference type="UniProtKB" id="P53996"/>
    </source>
</evidence>
<evidence type="ECO:0000250" key="2">
    <source>
        <dbReference type="UniProtKB" id="P62633"/>
    </source>
</evidence>
<evidence type="ECO:0000255" key="3">
    <source>
        <dbReference type="PROSITE-ProRule" id="PRU00047"/>
    </source>
</evidence>
<evidence type="ECO:0000269" key="4">
    <source>
    </source>
</evidence>
<evidence type="ECO:0000305" key="5"/>
<evidence type="ECO:0000312" key="6">
    <source>
        <dbReference type="RGD" id="621807"/>
    </source>
</evidence>
<dbReference type="EMBL" id="D45254">
    <property type="protein sequence ID" value="BAA08212.1"/>
    <property type="molecule type" value="mRNA"/>
</dbReference>
<dbReference type="EMBL" id="AF242550">
    <property type="protein sequence ID" value="AAF78224.1"/>
    <property type="molecule type" value="mRNA"/>
</dbReference>
<dbReference type="EMBL" id="AY329624">
    <property type="protein sequence ID" value="AAR89464.1"/>
    <property type="molecule type" value="Genomic_DNA"/>
</dbReference>
<dbReference type="EMBL" id="AB158421">
    <property type="protein sequence ID" value="BAE16993.1"/>
    <property type="molecule type" value="mRNA"/>
</dbReference>
<dbReference type="EMBL" id="AB158422">
    <property type="protein sequence ID" value="BAE16994.1"/>
    <property type="molecule type" value="mRNA"/>
</dbReference>
<dbReference type="EMBL" id="BC062225">
    <property type="protein sequence ID" value="AAH62225.1"/>
    <property type="molecule type" value="mRNA"/>
</dbReference>
<dbReference type="PIR" id="JC2512">
    <property type="entry name" value="JC2512"/>
</dbReference>
<dbReference type="RefSeq" id="NP_072120.1">
    <property type="nucleotide sequence ID" value="NM_022598.1"/>
</dbReference>
<dbReference type="BioGRID" id="249114">
    <property type="interactions" value="1"/>
</dbReference>
<dbReference type="FunCoup" id="P62634">
    <property type="interactions" value="2103"/>
</dbReference>
<dbReference type="STRING" id="10116.ENSRNOP00000013884"/>
<dbReference type="iPTMnet" id="P62634"/>
<dbReference type="PhosphoSitePlus" id="P62634"/>
<dbReference type="jPOST" id="P62634"/>
<dbReference type="PaxDb" id="10116-ENSRNOP00000013884"/>
<dbReference type="GeneID" id="64530"/>
<dbReference type="KEGG" id="rno:64530"/>
<dbReference type="AGR" id="RGD:621807"/>
<dbReference type="CTD" id="7555"/>
<dbReference type="RGD" id="621807">
    <property type="gene designation" value="Cnbp"/>
</dbReference>
<dbReference type="VEuPathDB" id="HostDB:ENSRNOG00000010239"/>
<dbReference type="eggNOG" id="KOG4400">
    <property type="taxonomic scope" value="Eukaryota"/>
</dbReference>
<dbReference type="HOGENOM" id="CLU_058879_4_0_1"/>
<dbReference type="InParanoid" id="P62634"/>
<dbReference type="OrthoDB" id="427960at2759"/>
<dbReference type="PhylomeDB" id="P62634"/>
<dbReference type="PRO" id="PR:P62634"/>
<dbReference type="Proteomes" id="UP000002494">
    <property type="component" value="Chromosome 4"/>
</dbReference>
<dbReference type="Bgee" id="ENSRNOG00000010239">
    <property type="expression patterns" value="Expressed in quadriceps femoris and 20 other cell types or tissues"/>
</dbReference>
<dbReference type="GO" id="GO:0005737">
    <property type="term" value="C:cytoplasm"/>
    <property type="evidence" value="ECO:0000318"/>
    <property type="project" value="GO_Central"/>
</dbReference>
<dbReference type="GO" id="GO:0005829">
    <property type="term" value="C:cytosol"/>
    <property type="evidence" value="ECO:0000250"/>
    <property type="project" value="UniProtKB"/>
</dbReference>
<dbReference type="GO" id="GO:0005783">
    <property type="term" value="C:endoplasmic reticulum"/>
    <property type="evidence" value="ECO:0000250"/>
    <property type="project" value="UniProtKB"/>
</dbReference>
<dbReference type="GO" id="GO:0005634">
    <property type="term" value="C:nucleus"/>
    <property type="evidence" value="ECO:0000266"/>
    <property type="project" value="RGD"/>
</dbReference>
<dbReference type="GO" id="GO:0051880">
    <property type="term" value="F:G-quadruplex DNA binding"/>
    <property type="evidence" value="ECO:0000266"/>
    <property type="project" value="RGD"/>
</dbReference>
<dbReference type="GO" id="GO:0003729">
    <property type="term" value="F:mRNA binding"/>
    <property type="evidence" value="ECO:0000318"/>
    <property type="project" value="GO_Central"/>
</dbReference>
<dbReference type="GO" id="GO:0003697">
    <property type="term" value="F:single-stranded DNA binding"/>
    <property type="evidence" value="ECO:0000314"/>
    <property type="project" value="RGD"/>
</dbReference>
<dbReference type="GO" id="GO:0003727">
    <property type="term" value="F:single-stranded RNA binding"/>
    <property type="evidence" value="ECO:0000314"/>
    <property type="project" value="RGD"/>
</dbReference>
<dbReference type="GO" id="GO:0045182">
    <property type="term" value="F:translation regulator activity"/>
    <property type="evidence" value="ECO:0000318"/>
    <property type="project" value="GO_Central"/>
</dbReference>
<dbReference type="GO" id="GO:0008270">
    <property type="term" value="F:zinc ion binding"/>
    <property type="evidence" value="ECO:0007669"/>
    <property type="project" value="UniProtKB-KW"/>
</dbReference>
<dbReference type="GO" id="GO:0071919">
    <property type="term" value="P:G-quadruplex DNA formation"/>
    <property type="evidence" value="ECO:0000266"/>
    <property type="project" value="RGD"/>
</dbReference>
<dbReference type="GO" id="GO:0000122">
    <property type="term" value="P:negative regulation of transcription by RNA polymerase II"/>
    <property type="evidence" value="ECO:0000266"/>
    <property type="project" value="RGD"/>
</dbReference>
<dbReference type="GO" id="GO:0008284">
    <property type="term" value="P:positive regulation of cell population proliferation"/>
    <property type="evidence" value="ECO:0000250"/>
    <property type="project" value="UniProtKB"/>
</dbReference>
<dbReference type="GO" id="GO:2000767">
    <property type="term" value="P:positive regulation of cytoplasmic translation"/>
    <property type="evidence" value="ECO:0000318"/>
    <property type="project" value="GO_Central"/>
</dbReference>
<dbReference type="GO" id="GO:0045893">
    <property type="term" value="P:positive regulation of DNA-templated transcription"/>
    <property type="evidence" value="ECO:0000250"/>
    <property type="project" value="UniProtKB"/>
</dbReference>
<dbReference type="GO" id="GO:0045944">
    <property type="term" value="P:positive regulation of transcription by RNA polymerase II"/>
    <property type="evidence" value="ECO:0000250"/>
    <property type="project" value="UniProtKB"/>
</dbReference>
<dbReference type="FunFam" id="4.10.60.10:FF:000002">
    <property type="entry name" value="cellular nucleic acid-binding protein-like isoform X1"/>
    <property type="match status" value="2"/>
</dbReference>
<dbReference type="FunFam" id="4.10.60.10:FF:000006">
    <property type="entry name" value="cellular nucleic acid-binding protein-like isoform X1"/>
    <property type="match status" value="1"/>
</dbReference>
<dbReference type="FunFam" id="4.10.60.10:FF:000026">
    <property type="entry name" value="cellular nucleic acid-binding protein-like isoform X1"/>
    <property type="match status" value="1"/>
</dbReference>
<dbReference type="Gene3D" id="4.10.60.10">
    <property type="entry name" value="Zinc finger, CCHC-type"/>
    <property type="match status" value="5"/>
</dbReference>
<dbReference type="InterPro" id="IPR001878">
    <property type="entry name" value="Znf_CCHC"/>
</dbReference>
<dbReference type="InterPro" id="IPR036875">
    <property type="entry name" value="Znf_CCHC_sf"/>
</dbReference>
<dbReference type="PANTHER" id="PTHR47103">
    <property type="entry name" value="DNA-BINDING PROTEIN"/>
    <property type="match status" value="1"/>
</dbReference>
<dbReference type="PANTHER" id="PTHR47103:SF8">
    <property type="entry name" value="DNA-BINDING PROTEIN"/>
    <property type="match status" value="1"/>
</dbReference>
<dbReference type="Pfam" id="PF00098">
    <property type="entry name" value="zf-CCHC"/>
    <property type="match status" value="7"/>
</dbReference>
<dbReference type="SMART" id="SM00343">
    <property type="entry name" value="ZnF_C2HC"/>
    <property type="match status" value="7"/>
</dbReference>
<dbReference type="SUPFAM" id="SSF57756">
    <property type="entry name" value="Retrovirus zinc finger-like domains"/>
    <property type="match status" value="4"/>
</dbReference>
<dbReference type="PROSITE" id="PS50158">
    <property type="entry name" value="ZF_CCHC"/>
    <property type="match status" value="7"/>
</dbReference>
<protein>
    <recommendedName>
        <fullName evidence="6">CCHC-type zinc finger nucleic acid binding protein</fullName>
    </recommendedName>
    <alternativeName>
        <fullName evidence="5">Cellular nucleic acid-binding protein</fullName>
        <shortName evidence="5">CNBP</shortName>
    </alternativeName>
    <alternativeName>
        <fullName>Zinc finger protein 9</fullName>
    </alternativeName>
</protein>
<reference key="1">
    <citation type="journal article" date="1995" name="DNA Res.">
        <title>Cloning and characterization of rat cellular nucleic acid binding protein (CNBP) cDNA.</title>
        <authorList>
            <person name="Yasuda J."/>
            <person name="Mashiyama S."/>
            <person name="Makino R."/>
            <person name="Ohyama S."/>
            <person name="Sekiya T."/>
            <person name="Hayashi K."/>
        </authorList>
    </citation>
    <scope>NUCLEOTIDE SEQUENCE [MRNA]</scope>
    <scope>FUNCTION</scope>
    <source>
        <strain>Sprague-Dawley</strain>
    </source>
</reference>
<reference key="2">
    <citation type="submission" date="2000-03" db="EMBL/GenBank/DDBJ databases">
        <title>Identification and characterization of a distal repression region that represses clusterin expression.</title>
        <authorList>
            <person name="Wang Z."/>
            <person name="Tenniswood M."/>
        </authorList>
    </citation>
    <scope>NUCLEOTIDE SEQUENCE [MRNA]</scope>
    <source>
        <strain>Sprague-Dawley</strain>
        <tissue>Kidney</tissue>
    </source>
</reference>
<reference key="3">
    <citation type="journal article" date="2003" name="Am. J. Hum. Genet.">
        <title>Myotonic dystrophy type 2: human founder haplotype and evolutionary conservation of the repeat tract.</title>
        <authorList>
            <person name="Liquori C.L."/>
            <person name="Ikeda Y."/>
            <person name="Weatherspoon M."/>
            <person name="Ricker K."/>
            <person name="Schoser B.G."/>
            <person name="Dalton J.C."/>
            <person name="Day J.W."/>
            <person name="Ranum L.P."/>
        </authorList>
    </citation>
    <scope>NUCLEOTIDE SEQUENCE [GENOMIC DNA]</scope>
    <source>
        <strain>Brown Norway</strain>
    </source>
</reference>
<reference key="4">
    <citation type="journal article" date="2005" name="Genomics">
        <title>Fine mapping of radiation susceptibility and gene expression analysis of LEC congenic rat lines.</title>
        <authorList>
            <person name="Tsuji A.B."/>
            <person name="Sugyo A."/>
            <person name="Ogiu T."/>
            <person name="Sagara M."/>
            <person name="Kimura T."/>
            <person name="Ishikawa A."/>
            <person name="Sudo H."/>
            <person name="Ohtsuki M."/>
            <person name="Aburatani H."/>
            <person name="Imai T."/>
            <person name="Harada Y.N."/>
        </authorList>
    </citation>
    <scope>NUCLEOTIDE SEQUENCE [MRNA]</scope>
    <source>
        <strain>Fischer 344/DuCrj</strain>
        <strain>LEC/Crj</strain>
    </source>
</reference>
<reference key="5">
    <citation type="journal article" date="2004" name="Genome Res.">
        <title>The status, quality, and expansion of the NIH full-length cDNA project: the Mammalian Gene Collection (MGC).</title>
        <authorList>
            <consortium name="The MGC Project Team"/>
        </authorList>
    </citation>
    <scope>NUCLEOTIDE SEQUENCE [LARGE SCALE MRNA]</scope>
    <source>
        <tissue>Pituitary</tissue>
    </source>
</reference>
<feature type="initiator methionine" description="Removed" evidence="2">
    <location>
        <position position="1"/>
    </location>
</feature>
<feature type="chain" id="PRO_0000089968" description="CCHC-type zinc finger nucleic acid binding protein">
    <location>
        <begin position="2"/>
        <end position="177"/>
    </location>
</feature>
<feature type="zinc finger region" description="CCHC-type 1" evidence="3">
    <location>
        <begin position="4"/>
        <end position="21"/>
    </location>
</feature>
<feature type="zinc finger region" description="CCHC-type 2" evidence="3">
    <location>
        <begin position="52"/>
        <end position="69"/>
    </location>
</feature>
<feature type="zinc finger region" description="CCHC-type 3" evidence="3">
    <location>
        <begin position="72"/>
        <end position="89"/>
    </location>
</feature>
<feature type="zinc finger region" description="CCHC-type 4" evidence="3">
    <location>
        <begin position="96"/>
        <end position="113"/>
    </location>
</feature>
<feature type="zinc finger region" description="CCHC-type 5" evidence="3">
    <location>
        <begin position="117"/>
        <end position="134"/>
    </location>
</feature>
<feature type="zinc finger region" description="CCHC-type 6" evidence="3">
    <location>
        <begin position="135"/>
        <end position="152"/>
    </location>
</feature>
<feature type="zinc finger region" description="CCHC-type 7" evidence="3">
    <location>
        <begin position="156"/>
        <end position="173"/>
    </location>
</feature>
<feature type="region of interest" description="RNA-binding Arg/Gly-rich region (RGG-box)" evidence="2">
    <location>
        <begin position="25"/>
        <end position="38"/>
    </location>
</feature>
<feature type="modified residue" description="N-acetylserine" evidence="2">
    <location>
        <position position="2"/>
    </location>
</feature>
<feature type="modified residue" description="N6-acetyllysine" evidence="1">
    <location>
        <position position="8"/>
    </location>
</feature>
<feature type="modified residue" description="Omega-N-methylarginine; by PRMT1" evidence="2">
    <location>
        <position position="25"/>
    </location>
</feature>
<feature type="modified residue" description="Omega-N-methylarginine; by PRMT1" evidence="2">
    <location>
        <position position="27"/>
    </location>
</feature>
<feature type="modified residue" description="Phosphoserine" evidence="1">
    <location>
        <position position="49"/>
    </location>
</feature>
<feature type="modified residue" description="Omega-N-methylarginine" evidence="2">
    <location>
        <position position="79"/>
    </location>
</feature>
<comment type="function">
    <text evidence="1 2 4">Single-stranded DNA-binding protein that preferentially binds to the sterol regulatory element (SRE) sequence 5'-GTGCGGTG-3', and thereby mediates transcriptional repression (By similarity). Has a role as transactivator of the Myc promoter (By similarity). Binds single-stranded RNA in a sequence-specific manner (PubMed:7788528). Binds G-rich elements in target mRNA coding sequences (By similarity). Prevents G-quadruplex structure formation in vitro, suggesting a role in supporting translation by resolving stable structures on mRNAs (By similarity).</text>
</comment>
<comment type="subunit">
    <text evidence="2">Associates with the 40S ribosomal subunit, the 80S ribosome and with polysomes.</text>
</comment>
<comment type="subcellular location">
    <subcellularLocation>
        <location evidence="1">Nucleus</location>
    </subcellularLocation>
    <subcellularLocation>
        <location evidence="2">Cytoplasm</location>
    </subcellularLocation>
    <subcellularLocation>
        <location evidence="1">Endoplasmic reticulum</location>
    </subcellularLocation>
</comment>
<comment type="PTM">
    <text evidence="2">Arginine methylation by PRMT1 in the Arg/Gly-rich region impedes RNA binding.</text>
</comment>
<sequence length="177" mass="19463">MSSNECFKCGRSGHWARECPTGGGRGRGMRSRGRGGFTSDRGFQFVSSSLPDICYRCGESGHLAKDCDLQEDACYNCGRGGHIAKDCKEPKREREQCCYNCGKPGHLARDCDHADEQKCYSCGEFGHIQKDCTKVKCYRCGETGHVAINCSKTSEVNCYRCGESGHLARECTIEATA</sequence>
<organism>
    <name type="scientific">Rattus norvegicus</name>
    <name type="common">Rat</name>
    <dbReference type="NCBI Taxonomy" id="10116"/>
    <lineage>
        <taxon>Eukaryota</taxon>
        <taxon>Metazoa</taxon>
        <taxon>Chordata</taxon>
        <taxon>Craniata</taxon>
        <taxon>Vertebrata</taxon>
        <taxon>Euteleostomi</taxon>
        <taxon>Mammalia</taxon>
        <taxon>Eutheria</taxon>
        <taxon>Euarchontoglires</taxon>
        <taxon>Glires</taxon>
        <taxon>Rodentia</taxon>
        <taxon>Myomorpha</taxon>
        <taxon>Muroidea</taxon>
        <taxon>Muridae</taxon>
        <taxon>Murinae</taxon>
        <taxon>Rattus</taxon>
    </lineage>
</organism>
<keyword id="KW-0007">Acetylation</keyword>
<keyword id="KW-0963">Cytoplasm</keyword>
<keyword id="KW-0238">DNA-binding</keyword>
<keyword id="KW-0256">Endoplasmic reticulum</keyword>
<keyword id="KW-0479">Metal-binding</keyword>
<keyword id="KW-0488">Methylation</keyword>
<keyword id="KW-0539">Nucleus</keyword>
<keyword id="KW-0597">Phosphoprotein</keyword>
<keyword id="KW-1185">Reference proteome</keyword>
<keyword id="KW-0677">Repeat</keyword>
<keyword id="KW-0678">Repressor</keyword>
<keyword id="KW-0804">Transcription</keyword>
<keyword id="KW-0805">Transcription regulation</keyword>
<keyword id="KW-0862">Zinc</keyword>
<keyword id="KW-0863">Zinc-finger</keyword>
<gene>
    <name evidence="6" type="primary">Cnbp</name>
    <name type="synonym">Znf9</name>
</gene>